<organism>
    <name type="scientific">Granulibacter bethesdensis (strain ATCC BAA-1260 / CGDNIH1)</name>
    <dbReference type="NCBI Taxonomy" id="391165"/>
    <lineage>
        <taxon>Bacteria</taxon>
        <taxon>Pseudomonadati</taxon>
        <taxon>Pseudomonadota</taxon>
        <taxon>Alphaproteobacteria</taxon>
        <taxon>Acetobacterales</taxon>
        <taxon>Acetobacteraceae</taxon>
        <taxon>Granulibacter</taxon>
    </lineage>
</organism>
<comment type="function">
    <text evidence="1">One of the primary rRNA binding proteins, this protein initially binds near the 5'-end of the 23S rRNA. It is important during the early stages of 50S assembly. It makes multiple contacts with different domains of the 23S rRNA in the assembled 50S subunit and ribosome.</text>
</comment>
<comment type="function">
    <text evidence="1">Forms part of the polypeptide exit tunnel.</text>
</comment>
<comment type="subunit">
    <text evidence="1">Part of the 50S ribosomal subunit.</text>
</comment>
<comment type="similarity">
    <text evidence="1">Belongs to the universal ribosomal protein uL4 family.</text>
</comment>
<accession>Q0BUP9</accession>
<proteinExistence type="inferred from homology"/>
<gene>
    <name evidence="1" type="primary">rplD</name>
    <name type="ordered locus">GbCGDNIH1_0555</name>
</gene>
<protein>
    <recommendedName>
        <fullName evidence="1">Large ribosomal subunit protein uL4</fullName>
    </recommendedName>
    <alternativeName>
        <fullName evidence="3">50S ribosomal protein L4</fullName>
    </alternativeName>
</protein>
<evidence type="ECO:0000255" key="1">
    <source>
        <dbReference type="HAMAP-Rule" id="MF_01328"/>
    </source>
</evidence>
<evidence type="ECO:0000256" key="2">
    <source>
        <dbReference type="SAM" id="MobiDB-lite"/>
    </source>
</evidence>
<evidence type="ECO:0000305" key="3"/>
<reference key="1">
    <citation type="journal article" date="2007" name="J. Bacteriol.">
        <title>Genome sequence analysis of the emerging human pathogenic acetic acid bacterium Granulibacter bethesdensis.</title>
        <authorList>
            <person name="Greenberg D.E."/>
            <person name="Porcella S.F."/>
            <person name="Zelazny A.M."/>
            <person name="Virtaneva K."/>
            <person name="Sturdevant D.E."/>
            <person name="Kupko J.J. III"/>
            <person name="Barbian K.D."/>
            <person name="Babar A."/>
            <person name="Dorward D.W."/>
            <person name="Holland S.M."/>
        </authorList>
    </citation>
    <scope>NUCLEOTIDE SEQUENCE [LARGE SCALE GENOMIC DNA]</scope>
    <source>
        <strain>ATCC BAA-1260 / CGDNIH1</strain>
    </source>
</reference>
<dbReference type="EMBL" id="CP000394">
    <property type="protein sequence ID" value="ABI61453.1"/>
    <property type="molecule type" value="Genomic_DNA"/>
</dbReference>
<dbReference type="RefSeq" id="WP_011631262.1">
    <property type="nucleotide sequence ID" value="NC_008343.2"/>
</dbReference>
<dbReference type="SMR" id="Q0BUP9"/>
<dbReference type="STRING" id="391165.GbCGDNIH1_0555"/>
<dbReference type="GeneID" id="69744808"/>
<dbReference type="KEGG" id="gbe:GbCGDNIH1_0555"/>
<dbReference type="eggNOG" id="COG0088">
    <property type="taxonomic scope" value="Bacteria"/>
</dbReference>
<dbReference type="HOGENOM" id="CLU_041575_5_1_5"/>
<dbReference type="OrthoDB" id="9803201at2"/>
<dbReference type="Proteomes" id="UP000001963">
    <property type="component" value="Chromosome"/>
</dbReference>
<dbReference type="GO" id="GO:1990904">
    <property type="term" value="C:ribonucleoprotein complex"/>
    <property type="evidence" value="ECO:0007669"/>
    <property type="project" value="UniProtKB-KW"/>
</dbReference>
<dbReference type="GO" id="GO:0005840">
    <property type="term" value="C:ribosome"/>
    <property type="evidence" value="ECO:0007669"/>
    <property type="project" value="UniProtKB-KW"/>
</dbReference>
<dbReference type="GO" id="GO:0019843">
    <property type="term" value="F:rRNA binding"/>
    <property type="evidence" value="ECO:0007669"/>
    <property type="project" value="UniProtKB-UniRule"/>
</dbReference>
<dbReference type="GO" id="GO:0003735">
    <property type="term" value="F:structural constituent of ribosome"/>
    <property type="evidence" value="ECO:0007669"/>
    <property type="project" value="InterPro"/>
</dbReference>
<dbReference type="GO" id="GO:0006412">
    <property type="term" value="P:translation"/>
    <property type="evidence" value="ECO:0007669"/>
    <property type="project" value="UniProtKB-UniRule"/>
</dbReference>
<dbReference type="Gene3D" id="3.40.1370.10">
    <property type="match status" value="1"/>
</dbReference>
<dbReference type="HAMAP" id="MF_01328_B">
    <property type="entry name" value="Ribosomal_uL4_B"/>
    <property type="match status" value="1"/>
</dbReference>
<dbReference type="InterPro" id="IPR002136">
    <property type="entry name" value="Ribosomal_uL4"/>
</dbReference>
<dbReference type="InterPro" id="IPR013005">
    <property type="entry name" value="Ribosomal_uL4-like"/>
</dbReference>
<dbReference type="InterPro" id="IPR023574">
    <property type="entry name" value="Ribosomal_uL4_dom_sf"/>
</dbReference>
<dbReference type="NCBIfam" id="TIGR03953">
    <property type="entry name" value="rplD_bact"/>
    <property type="match status" value="1"/>
</dbReference>
<dbReference type="PANTHER" id="PTHR10746">
    <property type="entry name" value="50S RIBOSOMAL PROTEIN L4"/>
    <property type="match status" value="1"/>
</dbReference>
<dbReference type="PANTHER" id="PTHR10746:SF6">
    <property type="entry name" value="LARGE RIBOSOMAL SUBUNIT PROTEIN UL4M"/>
    <property type="match status" value="1"/>
</dbReference>
<dbReference type="Pfam" id="PF00573">
    <property type="entry name" value="Ribosomal_L4"/>
    <property type="match status" value="1"/>
</dbReference>
<dbReference type="SUPFAM" id="SSF52166">
    <property type="entry name" value="Ribosomal protein L4"/>
    <property type="match status" value="1"/>
</dbReference>
<feature type="chain" id="PRO_1000052407" description="Large ribosomal subunit protein uL4">
    <location>
        <begin position="1"/>
        <end position="215"/>
    </location>
</feature>
<feature type="region of interest" description="Disordered" evidence="2">
    <location>
        <begin position="51"/>
        <end position="88"/>
    </location>
</feature>
<keyword id="KW-1185">Reference proteome</keyword>
<keyword id="KW-0687">Ribonucleoprotein</keyword>
<keyword id="KW-0689">Ribosomal protein</keyword>
<keyword id="KW-0694">RNA-binding</keyword>
<keyword id="KW-0699">rRNA-binding</keyword>
<name>RL4_GRABC</name>
<sequence>MQIEIKTLDNGSAGTAELPDEIFAATPRADIMARVVHWQLACRRAGTHKVKGMGEVSGTTKKPYRQKGTGNARQGSLRAPQFRTGGAVHGPVVRDHGYDLPKKVRRLGLISALSQKQAEGKLVVIDTAAGMEKTRDLAAKLRALGWRSALIVDGASVDEGFARASRSLLAVDVLPTIGANVYDILNHDVLAITVAGVEALKARLGFGAAEERSAA</sequence>